<gene>
    <name evidence="1" type="primary">groES</name>
    <name evidence="1" type="synonym">groS</name>
    <name type="ordered locus">Dole_0549</name>
</gene>
<name>CH10_DESOH</name>
<organism>
    <name type="scientific">Desulfosudis oleivorans (strain DSM 6200 / JCM 39069 / Hxd3)</name>
    <name type="common">Desulfococcus oleovorans</name>
    <dbReference type="NCBI Taxonomy" id="96561"/>
    <lineage>
        <taxon>Bacteria</taxon>
        <taxon>Pseudomonadati</taxon>
        <taxon>Thermodesulfobacteriota</taxon>
        <taxon>Desulfobacteria</taxon>
        <taxon>Desulfobacterales</taxon>
        <taxon>Desulfosudaceae</taxon>
        <taxon>Desulfosudis</taxon>
    </lineage>
</organism>
<sequence>MKFRPLHDRILVKRVEEETKTKGGIIIPDTAKEKPIEGKVMAVGNGRLGEDGKLIPLEVKKGDRVLFGKYGGTEVKMDGQEYLIMREDDILGILE</sequence>
<feature type="chain" id="PRO_1000129649" description="Co-chaperonin GroES">
    <location>
        <begin position="1"/>
        <end position="95"/>
    </location>
</feature>
<dbReference type="EMBL" id="CP000859">
    <property type="protein sequence ID" value="ABW66359.1"/>
    <property type="molecule type" value="Genomic_DNA"/>
</dbReference>
<dbReference type="RefSeq" id="WP_012173978.1">
    <property type="nucleotide sequence ID" value="NC_009943.1"/>
</dbReference>
<dbReference type="SMR" id="A8ZU47"/>
<dbReference type="STRING" id="96561.Dole_0549"/>
<dbReference type="KEGG" id="dol:Dole_0549"/>
<dbReference type="eggNOG" id="COG0234">
    <property type="taxonomic scope" value="Bacteria"/>
</dbReference>
<dbReference type="HOGENOM" id="CLU_132825_2_0_7"/>
<dbReference type="OrthoDB" id="9806791at2"/>
<dbReference type="Proteomes" id="UP000008561">
    <property type="component" value="Chromosome"/>
</dbReference>
<dbReference type="GO" id="GO:0005737">
    <property type="term" value="C:cytoplasm"/>
    <property type="evidence" value="ECO:0007669"/>
    <property type="project" value="UniProtKB-SubCell"/>
</dbReference>
<dbReference type="GO" id="GO:0005524">
    <property type="term" value="F:ATP binding"/>
    <property type="evidence" value="ECO:0007669"/>
    <property type="project" value="InterPro"/>
</dbReference>
<dbReference type="GO" id="GO:0046872">
    <property type="term" value="F:metal ion binding"/>
    <property type="evidence" value="ECO:0007669"/>
    <property type="project" value="TreeGrafter"/>
</dbReference>
<dbReference type="GO" id="GO:0044183">
    <property type="term" value="F:protein folding chaperone"/>
    <property type="evidence" value="ECO:0007669"/>
    <property type="project" value="InterPro"/>
</dbReference>
<dbReference type="GO" id="GO:0051087">
    <property type="term" value="F:protein-folding chaperone binding"/>
    <property type="evidence" value="ECO:0007669"/>
    <property type="project" value="TreeGrafter"/>
</dbReference>
<dbReference type="GO" id="GO:0051082">
    <property type="term" value="F:unfolded protein binding"/>
    <property type="evidence" value="ECO:0007669"/>
    <property type="project" value="TreeGrafter"/>
</dbReference>
<dbReference type="GO" id="GO:0051085">
    <property type="term" value="P:chaperone cofactor-dependent protein refolding"/>
    <property type="evidence" value="ECO:0007669"/>
    <property type="project" value="TreeGrafter"/>
</dbReference>
<dbReference type="CDD" id="cd00320">
    <property type="entry name" value="cpn10"/>
    <property type="match status" value="1"/>
</dbReference>
<dbReference type="FunFam" id="2.30.33.40:FF:000001">
    <property type="entry name" value="10 kDa chaperonin"/>
    <property type="match status" value="1"/>
</dbReference>
<dbReference type="Gene3D" id="2.30.33.40">
    <property type="entry name" value="GroES chaperonin"/>
    <property type="match status" value="1"/>
</dbReference>
<dbReference type="HAMAP" id="MF_00580">
    <property type="entry name" value="CH10"/>
    <property type="match status" value="1"/>
</dbReference>
<dbReference type="InterPro" id="IPR020818">
    <property type="entry name" value="Chaperonin_GroES"/>
</dbReference>
<dbReference type="InterPro" id="IPR037124">
    <property type="entry name" value="Chaperonin_GroES_sf"/>
</dbReference>
<dbReference type="InterPro" id="IPR018369">
    <property type="entry name" value="Chaprnonin_Cpn10_CS"/>
</dbReference>
<dbReference type="InterPro" id="IPR011032">
    <property type="entry name" value="GroES-like_sf"/>
</dbReference>
<dbReference type="NCBIfam" id="NF001527">
    <property type="entry name" value="PRK00364.1-2"/>
    <property type="match status" value="1"/>
</dbReference>
<dbReference type="NCBIfam" id="NF001529">
    <property type="entry name" value="PRK00364.1-5"/>
    <property type="match status" value="1"/>
</dbReference>
<dbReference type="NCBIfam" id="NF001531">
    <property type="entry name" value="PRK00364.2-2"/>
    <property type="match status" value="1"/>
</dbReference>
<dbReference type="NCBIfam" id="NF001533">
    <property type="entry name" value="PRK00364.2-4"/>
    <property type="match status" value="1"/>
</dbReference>
<dbReference type="NCBIfam" id="NF001534">
    <property type="entry name" value="PRK00364.2-5"/>
    <property type="match status" value="1"/>
</dbReference>
<dbReference type="NCBIfam" id="NF001537">
    <property type="entry name" value="PRK00364.3-3"/>
    <property type="match status" value="1"/>
</dbReference>
<dbReference type="PANTHER" id="PTHR10772">
    <property type="entry name" value="10 KDA HEAT SHOCK PROTEIN"/>
    <property type="match status" value="1"/>
</dbReference>
<dbReference type="PANTHER" id="PTHR10772:SF58">
    <property type="entry name" value="CO-CHAPERONIN GROES"/>
    <property type="match status" value="1"/>
</dbReference>
<dbReference type="Pfam" id="PF00166">
    <property type="entry name" value="Cpn10"/>
    <property type="match status" value="1"/>
</dbReference>
<dbReference type="PRINTS" id="PR00297">
    <property type="entry name" value="CHAPERONIN10"/>
</dbReference>
<dbReference type="SMART" id="SM00883">
    <property type="entry name" value="Cpn10"/>
    <property type="match status" value="1"/>
</dbReference>
<dbReference type="SUPFAM" id="SSF50129">
    <property type="entry name" value="GroES-like"/>
    <property type="match status" value="1"/>
</dbReference>
<dbReference type="PROSITE" id="PS00681">
    <property type="entry name" value="CHAPERONINS_CPN10"/>
    <property type="match status" value="1"/>
</dbReference>
<evidence type="ECO:0000255" key="1">
    <source>
        <dbReference type="HAMAP-Rule" id="MF_00580"/>
    </source>
</evidence>
<proteinExistence type="inferred from homology"/>
<reference key="1">
    <citation type="submission" date="2007-10" db="EMBL/GenBank/DDBJ databases">
        <title>Complete sequence of Desulfococcus oleovorans Hxd3.</title>
        <authorList>
            <consortium name="US DOE Joint Genome Institute"/>
            <person name="Copeland A."/>
            <person name="Lucas S."/>
            <person name="Lapidus A."/>
            <person name="Barry K."/>
            <person name="Glavina del Rio T."/>
            <person name="Dalin E."/>
            <person name="Tice H."/>
            <person name="Pitluck S."/>
            <person name="Kiss H."/>
            <person name="Brettin T."/>
            <person name="Bruce D."/>
            <person name="Detter J.C."/>
            <person name="Han C."/>
            <person name="Schmutz J."/>
            <person name="Larimer F."/>
            <person name="Land M."/>
            <person name="Hauser L."/>
            <person name="Kyrpides N."/>
            <person name="Kim E."/>
            <person name="Wawrik B."/>
            <person name="Richardson P."/>
        </authorList>
    </citation>
    <scope>NUCLEOTIDE SEQUENCE [LARGE SCALE GENOMIC DNA]</scope>
    <source>
        <strain>DSM 6200 / JCM 39069 / Hxd3</strain>
    </source>
</reference>
<comment type="function">
    <text evidence="1">Together with the chaperonin GroEL, plays an essential role in assisting protein folding. The GroEL-GroES system forms a nano-cage that allows encapsulation of the non-native substrate proteins and provides a physical environment optimized to promote and accelerate protein folding. GroES binds to the apical surface of the GroEL ring, thereby capping the opening of the GroEL channel.</text>
</comment>
<comment type="subunit">
    <text evidence="1">Heptamer of 7 subunits arranged in a ring. Interacts with the chaperonin GroEL.</text>
</comment>
<comment type="subcellular location">
    <subcellularLocation>
        <location evidence="1">Cytoplasm</location>
    </subcellularLocation>
</comment>
<comment type="similarity">
    <text evidence="1">Belongs to the GroES chaperonin family.</text>
</comment>
<accession>A8ZU47</accession>
<keyword id="KW-0143">Chaperone</keyword>
<keyword id="KW-0963">Cytoplasm</keyword>
<keyword id="KW-1185">Reference proteome</keyword>
<protein>
    <recommendedName>
        <fullName evidence="1">Co-chaperonin GroES</fullName>
    </recommendedName>
    <alternativeName>
        <fullName evidence="1">10 kDa chaperonin</fullName>
    </alternativeName>
    <alternativeName>
        <fullName evidence="1">Chaperonin-10</fullName>
        <shortName evidence="1">Cpn10</shortName>
    </alternativeName>
</protein>